<keyword id="KW-0997">Cell inner membrane</keyword>
<keyword id="KW-1003">Cell membrane</keyword>
<keyword id="KW-0472">Membrane</keyword>
<keyword id="KW-0812">Transmembrane</keyword>
<keyword id="KW-1133">Transmembrane helix</keyword>
<name>Y2662_VIBCM</name>
<feature type="chain" id="PRO_1000147671" description="UPF0761 membrane protein VCM66_2662">
    <location>
        <begin position="1"/>
        <end position="297"/>
    </location>
</feature>
<feature type="transmembrane region" description="Helical" evidence="1">
    <location>
        <begin position="43"/>
        <end position="63"/>
    </location>
</feature>
<feature type="transmembrane region" description="Helical" evidence="1">
    <location>
        <begin position="100"/>
        <end position="120"/>
    </location>
</feature>
<feature type="transmembrane region" description="Helical" evidence="1">
    <location>
        <begin position="135"/>
        <end position="155"/>
    </location>
</feature>
<feature type="transmembrane region" description="Helical" evidence="1">
    <location>
        <begin position="181"/>
        <end position="201"/>
    </location>
</feature>
<feature type="transmembrane region" description="Helical" evidence="1">
    <location>
        <begin position="213"/>
        <end position="233"/>
    </location>
</feature>
<feature type="transmembrane region" description="Helical" evidence="1">
    <location>
        <begin position="245"/>
        <end position="265"/>
    </location>
</feature>
<comment type="subcellular location">
    <subcellularLocation>
        <location evidence="1">Cell inner membrane</location>
        <topology evidence="1">Multi-pass membrane protein</topology>
    </subcellularLocation>
</comment>
<comment type="similarity">
    <text evidence="1">Belongs to the UPF0761 family.</text>
</comment>
<proteinExistence type="inferred from homology"/>
<sequence length="297" mass="33286">MKLTHSFIKQQARLGLNFFRYLLARMNHDRVNVNAGYLAYITLLSMVPMLTVLLSILSSFALFANAGEVIQDFVITHFVPAAGEVVKTALIEFVANTGKMTAVGGAFLFVAAIMLISNIDKNLNYIWRVQQKRRAVFSFSMYWMILTLGPILVGASIAATSYITSLKILDNEALSGVYNLFLRWLPFVLSYCAFVGLYLLVPNKKVHWQHAMLGALIAAILFELSKKGFAAYITQFPSYQLIYGALAAIPILFVWVYLCWLIVLVGAEVTAALGEREHWSDSQDMLHFAPLPKNEKE</sequence>
<gene>
    <name type="ordered locus">VCM66_2662</name>
</gene>
<protein>
    <recommendedName>
        <fullName evidence="1">UPF0761 membrane protein VCM66_2662</fullName>
    </recommendedName>
</protein>
<accession>C3LSG9</accession>
<evidence type="ECO:0000255" key="1">
    <source>
        <dbReference type="HAMAP-Rule" id="MF_00672"/>
    </source>
</evidence>
<dbReference type="EMBL" id="CP001233">
    <property type="protein sequence ID" value="ACP06956.1"/>
    <property type="molecule type" value="Genomic_DNA"/>
</dbReference>
<dbReference type="RefSeq" id="WP_001884068.1">
    <property type="nucleotide sequence ID" value="NC_012578.1"/>
</dbReference>
<dbReference type="KEGG" id="vcm:VCM66_2662"/>
<dbReference type="HOGENOM" id="CLU_032288_0_0_6"/>
<dbReference type="Proteomes" id="UP000001217">
    <property type="component" value="Chromosome I"/>
</dbReference>
<dbReference type="GO" id="GO:0005886">
    <property type="term" value="C:plasma membrane"/>
    <property type="evidence" value="ECO:0007669"/>
    <property type="project" value="UniProtKB-SubCell"/>
</dbReference>
<dbReference type="HAMAP" id="MF_00672">
    <property type="entry name" value="UPF0761"/>
    <property type="match status" value="1"/>
</dbReference>
<dbReference type="InterPro" id="IPR023679">
    <property type="entry name" value="UPF0761_bac"/>
</dbReference>
<dbReference type="InterPro" id="IPR017039">
    <property type="entry name" value="Virul_fac_BrkB"/>
</dbReference>
<dbReference type="NCBIfam" id="NF002457">
    <property type="entry name" value="PRK01637.1"/>
    <property type="match status" value="1"/>
</dbReference>
<dbReference type="NCBIfam" id="TIGR00765">
    <property type="entry name" value="yihY_not_rbn"/>
    <property type="match status" value="1"/>
</dbReference>
<dbReference type="PANTHER" id="PTHR30213">
    <property type="entry name" value="INNER MEMBRANE PROTEIN YHJD"/>
    <property type="match status" value="1"/>
</dbReference>
<dbReference type="PANTHER" id="PTHR30213:SF0">
    <property type="entry name" value="UPF0761 MEMBRANE PROTEIN YIHY"/>
    <property type="match status" value="1"/>
</dbReference>
<dbReference type="Pfam" id="PF03631">
    <property type="entry name" value="Virul_fac_BrkB"/>
    <property type="match status" value="1"/>
</dbReference>
<dbReference type="PIRSF" id="PIRSF035875">
    <property type="entry name" value="RNase_BN"/>
    <property type="match status" value="1"/>
</dbReference>
<organism>
    <name type="scientific">Vibrio cholerae serotype O1 (strain M66-2)</name>
    <dbReference type="NCBI Taxonomy" id="579112"/>
    <lineage>
        <taxon>Bacteria</taxon>
        <taxon>Pseudomonadati</taxon>
        <taxon>Pseudomonadota</taxon>
        <taxon>Gammaproteobacteria</taxon>
        <taxon>Vibrionales</taxon>
        <taxon>Vibrionaceae</taxon>
        <taxon>Vibrio</taxon>
    </lineage>
</organism>
<reference key="1">
    <citation type="journal article" date="2008" name="PLoS ONE">
        <title>A recalibrated molecular clock and independent origins for the cholera pandemic clones.</title>
        <authorList>
            <person name="Feng L."/>
            <person name="Reeves P.R."/>
            <person name="Lan R."/>
            <person name="Ren Y."/>
            <person name="Gao C."/>
            <person name="Zhou Z."/>
            <person name="Ren Y."/>
            <person name="Cheng J."/>
            <person name="Wang W."/>
            <person name="Wang J."/>
            <person name="Qian W."/>
            <person name="Li D."/>
            <person name="Wang L."/>
        </authorList>
    </citation>
    <scope>NUCLEOTIDE SEQUENCE [LARGE SCALE GENOMIC DNA]</scope>
    <source>
        <strain>M66-2</strain>
    </source>
</reference>